<accession>Q6D8V4</accession>
<gene>
    <name evidence="2" type="primary">oiaC</name>
    <name evidence="3" type="ordered locus">ECA0868</name>
</gene>
<sequence>MAIGLSTYAFFWRASSRVPNPLGLAAMLEQTAESGAGVFQICDYAAVEALSPAELEKLRQRAVDLGIQLELGTRGLATDHLTRYLTMARALDVRFIRTMFNSATHKPTQDEALALLRCVLPEFEQYNIQLGLETYEQVKTRDVLAVVDAIDSPALGICLDPGNCVAALEYPHEVIELTASRVVNLHIKDFAFARQEGWVGFTYSGCLLGTGLLDYDALHQTIRPNERNINQIVEHWLPWQASAEETCRLEDAWTRHSLNYLYTRNPYANRSSHIL</sequence>
<reference key="1">
    <citation type="journal article" date="2004" name="Proc. Natl. Acad. Sci. U.S.A.">
        <title>Genome sequence of the enterobacterial phytopathogen Erwinia carotovora subsp. atroseptica and characterization of virulence factors.</title>
        <authorList>
            <person name="Bell K.S."/>
            <person name="Sebaihia M."/>
            <person name="Pritchard L."/>
            <person name="Holden M.T.G."/>
            <person name="Hyman L.J."/>
            <person name="Holeva M.C."/>
            <person name="Thomson N.R."/>
            <person name="Bentley S.D."/>
            <person name="Churcher L.J.C."/>
            <person name="Mungall K."/>
            <person name="Atkin R."/>
            <person name="Bason N."/>
            <person name="Brooks K."/>
            <person name="Chillingworth T."/>
            <person name="Clark K."/>
            <person name="Doggett J."/>
            <person name="Fraser A."/>
            <person name="Hance Z."/>
            <person name="Hauser H."/>
            <person name="Jagels K."/>
            <person name="Moule S."/>
            <person name="Norbertczak H."/>
            <person name="Ormond D."/>
            <person name="Price C."/>
            <person name="Quail M.A."/>
            <person name="Sanders M."/>
            <person name="Walker D."/>
            <person name="Whitehead S."/>
            <person name="Salmond G.P.C."/>
            <person name="Birch P.R.J."/>
            <person name="Parkhill J."/>
            <person name="Toth I.K."/>
        </authorList>
    </citation>
    <scope>NUCLEOTIDE SEQUENCE [LARGE SCALE GENOMIC DNA]</scope>
    <source>
        <strain>SCRI 1043 / ATCC BAA-672</strain>
    </source>
</reference>
<reference key="2">
    <citation type="journal article" date="2018" name="Nat. Chem. Biol.">
        <title>Functional assignment of multiple catabolic pathways for D-apiose.</title>
        <authorList>
            <person name="Carter M.S."/>
            <person name="Zhang X."/>
            <person name="Huang H."/>
            <person name="Bouvier J.T."/>
            <person name="Francisco B.S."/>
            <person name="Vetting M.W."/>
            <person name="Al-Obaidi N."/>
            <person name="Bonanno J.B."/>
            <person name="Ghosh A."/>
            <person name="Zallot R.G."/>
            <person name="Andersen H.M."/>
            <person name="Almo S.C."/>
            <person name="Gerlt J.A."/>
        </authorList>
    </citation>
    <scope>FUNCTION</scope>
    <scope>CATALYTIC ACTIVITY</scope>
    <scope>PATHWAY</scope>
</reference>
<proteinExistence type="evidence at protein level"/>
<comment type="function">
    <text evidence="1">Involved in catabolism of D-apiose. Catalyzes decarboxylation of 3-oxo-isoapionate to L-erythrulose.</text>
</comment>
<comment type="catalytic activity">
    <reaction evidence="1">
        <text>3-oxoisoapionate + H(+) = L-erythrulose + CO2</text>
        <dbReference type="Rhea" id="RHEA:57052"/>
        <dbReference type="ChEBI" id="CHEBI:15378"/>
        <dbReference type="ChEBI" id="CHEBI:16526"/>
        <dbReference type="ChEBI" id="CHEBI:27913"/>
        <dbReference type="ChEBI" id="CHEBI:141353"/>
        <dbReference type="EC" id="4.1.1.120"/>
    </reaction>
</comment>
<comment type="pathway">
    <text evidence="1">Carbohydrate metabolism.</text>
</comment>
<organism>
    <name type="scientific">Pectobacterium atrosepticum (strain SCRI 1043 / ATCC BAA-672)</name>
    <name type="common">Erwinia carotovora subsp. atroseptica</name>
    <dbReference type="NCBI Taxonomy" id="218491"/>
    <lineage>
        <taxon>Bacteria</taxon>
        <taxon>Pseudomonadati</taxon>
        <taxon>Pseudomonadota</taxon>
        <taxon>Gammaproteobacteria</taxon>
        <taxon>Enterobacterales</taxon>
        <taxon>Pectobacteriaceae</taxon>
        <taxon>Pectobacterium</taxon>
    </lineage>
</organism>
<protein>
    <recommendedName>
        <fullName evidence="2">3-oxo-isoapionate decarboxylase</fullName>
        <ecNumber evidence="1">4.1.1.120</ecNumber>
    </recommendedName>
</protein>
<feature type="chain" id="PRO_0000446045" description="3-oxo-isoapionate decarboxylase">
    <location>
        <begin position="1"/>
        <end position="275"/>
    </location>
</feature>
<dbReference type="EC" id="4.1.1.120" evidence="1"/>
<dbReference type="EMBL" id="BX950851">
    <property type="protein sequence ID" value="CAG73780.1"/>
    <property type="molecule type" value="Genomic_DNA"/>
</dbReference>
<dbReference type="RefSeq" id="WP_011092471.1">
    <property type="nucleotide sequence ID" value="NC_004547.2"/>
</dbReference>
<dbReference type="SMR" id="Q6D8V4"/>
<dbReference type="STRING" id="218491.ECA0868"/>
<dbReference type="DNASU" id="2881391"/>
<dbReference type="KEGG" id="eca:ECA0868"/>
<dbReference type="PATRIC" id="fig|218491.5.peg.868"/>
<dbReference type="eggNOG" id="COG1082">
    <property type="taxonomic scope" value="Bacteria"/>
</dbReference>
<dbReference type="HOGENOM" id="CLU_076042_0_0_6"/>
<dbReference type="OrthoDB" id="3350993at2"/>
<dbReference type="BioCyc" id="MetaCyc:MONOMER-20961"/>
<dbReference type="BRENDA" id="4.1.1.120">
    <property type="organism ID" value="9330"/>
</dbReference>
<dbReference type="SABIO-RK" id="Q6D8V4"/>
<dbReference type="Proteomes" id="UP000007966">
    <property type="component" value="Chromosome"/>
</dbReference>
<dbReference type="GO" id="GO:0016831">
    <property type="term" value="F:carboxy-lyase activity"/>
    <property type="evidence" value="ECO:0007669"/>
    <property type="project" value="UniProtKB-KW"/>
</dbReference>
<dbReference type="Gene3D" id="3.20.20.150">
    <property type="entry name" value="Divalent-metal-dependent TIM barrel enzymes"/>
    <property type="match status" value="1"/>
</dbReference>
<dbReference type="InterPro" id="IPR050312">
    <property type="entry name" value="IolE/XylAMocC-like"/>
</dbReference>
<dbReference type="InterPro" id="IPR036237">
    <property type="entry name" value="Xyl_isomerase-like_sf"/>
</dbReference>
<dbReference type="InterPro" id="IPR013022">
    <property type="entry name" value="Xyl_isomerase-like_TIM-brl"/>
</dbReference>
<dbReference type="PANTHER" id="PTHR12110">
    <property type="entry name" value="HYDROXYPYRUVATE ISOMERASE"/>
    <property type="match status" value="1"/>
</dbReference>
<dbReference type="PANTHER" id="PTHR12110:SF52">
    <property type="entry name" value="XYLOSE ISOMERASE"/>
    <property type="match status" value="1"/>
</dbReference>
<dbReference type="Pfam" id="PF01261">
    <property type="entry name" value="AP_endonuc_2"/>
    <property type="match status" value="1"/>
</dbReference>
<dbReference type="SUPFAM" id="SSF51658">
    <property type="entry name" value="Xylose isomerase-like"/>
    <property type="match status" value="1"/>
</dbReference>
<keyword id="KW-0119">Carbohydrate metabolism</keyword>
<keyword id="KW-0210">Decarboxylase</keyword>
<keyword id="KW-0456">Lyase</keyword>
<keyword id="KW-1185">Reference proteome</keyword>
<evidence type="ECO:0000269" key="1">
    <source>
    </source>
</evidence>
<evidence type="ECO:0000303" key="2">
    <source>
    </source>
</evidence>
<evidence type="ECO:0000312" key="3">
    <source>
        <dbReference type="EMBL" id="CAG73780.1"/>
    </source>
</evidence>
<name>OIAC_PECAS</name>